<name>ARLY_THEVB</name>
<dbReference type="EC" id="4.3.2.1" evidence="1"/>
<dbReference type="EMBL" id="BA000039">
    <property type="protein sequence ID" value="BAC07918.1"/>
    <property type="molecule type" value="Genomic_DNA"/>
</dbReference>
<dbReference type="RefSeq" id="NP_681156.1">
    <property type="nucleotide sequence ID" value="NC_004113.1"/>
</dbReference>
<dbReference type="RefSeq" id="WP_011056221.1">
    <property type="nucleotide sequence ID" value="NC_004113.1"/>
</dbReference>
<dbReference type="SMR" id="Q8DLW0"/>
<dbReference type="STRING" id="197221.gene:10746952"/>
<dbReference type="EnsemblBacteria" id="BAC07918">
    <property type="protein sequence ID" value="BAC07918"/>
    <property type="gene ID" value="BAC07918"/>
</dbReference>
<dbReference type="KEGG" id="tel:tll0366"/>
<dbReference type="PATRIC" id="fig|197221.4.peg.383"/>
<dbReference type="eggNOG" id="COG0165">
    <property type="taxonomic scope" value="Bacteria"/>
</dbReference>
<dbReference type="UniPathway" id="UPA00068">
    <property type="reaction ID" value="UER00114"/>
</dbReference>
<dbReference type="Proteomes" id="UP000000440">
    <property type="component" value="Chromosome"/>
</dbReference>
<dbReference type="GO" id="GO:0005829">
    <property type="term" value="C:cytosol"/>
    <property type="evidence" value="ECO:0007669"/>
    <property type="project" value="TreeGrafter"/>
</dbReference>
<dbReference type="GO" id="GO:0004056">
    <property type="term" value="F:argininosuccinate lyase activity"/>
    <property type="evidence" value="ECO:0007669"/>
    <property type="project" value="UniProtKB-UniRule"/>
</dbReference>
<dbReference type="GO" id="GO:0042450">
    <property type="term" value="P:arginine biosynthetic process via ornithine"/>
    <property type="evidence" value="ECO:0007669"/>
    <property type="project" value="InterPro"/>
</dbReference>
<dbReference type="GO" id="GO:0006526">
    <property type="term" value="P:L-arginine biosynthetic process"/>
    <property type="evidence" value="ECO:0007669"/>
    <property type="project" value="UniProtKB-UniRule"/>
</dbReference>
<dbReference type="CDD" id="cd01359">
    <property type="entry name" value="Argininosuccinate_lyase"/>
    <property type="match status" value="1"/>
</dbReference>
<dbReference type="FunFam" id="1.10.275.10:FF:000002">
    <property type="entry name" value="Argininosuccinate lyase"/>
    <property type="match status" value="1"/>
</dbReference>
<dbReference type="FunFam" id="1.10.40.30:FF:000001">
    <property type="entry name" value="Argininosuccinate lyase"/>
    <property type="match status" value="1"/>
</dbReference>
<dbReference type="FunFam" id="1.20.200.10:FF:000015">
    <property type="entry name" value="argininosuccinate lyase isoform X2"/>
    <property type="match status" value="1"/>
</dbReference>
<dbReference type="Gene3D" id="1.10.40.30">
    <property type="entry name" value="Fumarase/aspartase (C-terminal domain)"/>
    <property type="match status" value="1"/>
</dbReference>
<dbReference type="Gene3D" id="1.20.200.10">
    <property type="entry name" value="Fumarase/aspartase (Central domain)"/>
    <property type="match status" value="1"/>
</dbReference>
<dbReference type="Gene3D" id="1.10.275.10">
    <property type="entry name" value="Fumarase/aspartase (N-terminal domain)"/>
    <property type="match status" value="1"/>
</dbReference>
<dbReference type="HAMAP" id="MF_00006">
    <property type="entry name" value="Arg_succ_lyase"/>
    <property type="match status" value="1"/>
</dbReference>
<dbReference type="InterPro" id="IPR029419">
    <property type="entry name" value="Arg_succ_lyase_C"/>
</dbReference>
<dbReference type="InterPro" id="IPR009049">
    <property type="entry name" value="Argininosuccinate_lyase"/>
</dbReference>
<dbReference type="InterPro" id="IPR024083">
    <property type="entry name" value="Fumarase/histidase_N"/>
</dbReference>
<dbReference type="InterPro" id="IPR020557">
    <property type="entry name" value="Fumarate_lyase_CS"/>
</dbReference>
<dbReference type="InterPro" id="IPR000362">
    <property type="entry name" value="Fumarate_lyase_fam"/>
</dbReference>
<dbReference type="InterPro" id="IPR022761">
    <property type="entry name" value="Fumarate_lyase_N"/>
</dbReference>
<dbReference type="InterPro" id="IPR008948">
    <property type="entry name" value="L-Aspartase-like"/>
</dbReference>
<dbReference type="NCBIfam" id="TIGR00838">
    <property type="entry name" value="argH"/>
    <property type="match status" value="1"/>
</dbReference>
<dbReference type="PANTHER" id="PTHR43814">
    <property type="entry name" value="ARGININOSUCCINATE LYASE"/>
    <property type="match status" value="1"/>
</dbReference>
<dbReference type="PANTHER" id="PTHR43814:SF1">
    <property type="entry name" value="ARGININOSUCCINATE LYASE"/>
    <property type="match status" value="1"/>
</dbReference>
<dbReference type="Pfam" id="PF14698">
    <property type="entry name" value="ASL_C2"/>
    <property type="match status" value="1"/>
</dbReference>
<dbReference type="Pfam" id="PF00206">
    <property type="entry name" value="Lyase_1"/>
    <property type="match status" value="1"/>
</dbReference>
<dbReference type="PRINTS" id="PR00145">
    <property type="entry name" value="ARGSUCLYASE"/>
</dbReference>
<dbReference type="PRINTS" id="PR00149">
    <property type="entry name" value="FUMRATELYASE"/>
</dbReference>
<dbReference type="SUPFAM" id="SSF48557">
    <property type="entry name" value="L-aspartase-like"/>
    <property type="match status" value="1"/>
</dbReference>
<dbReference type="PROSITE" id="PS00163">
    <property type="entry name" value="FUMARATE_LYASES"/>
    <property type="match status" value="1"/>
</dbReference>
<proteinExistence type="inferred from homology"/>
<reference key="1">
    <citation type="journal article" date="2002" name="DNA Res.">
        <title>Complete genome structure of the thermophilic cyanobacterium Thermosynechococcus elongatus BP-1.</title>
        <authorList>
            <person name="Nakamura Y."/>
            <person name="Kaneko T."/>
            <person name="Sato S."/>
            <person name="Ikeuchi M."/>
            <person name="Katoh H."/>
            <person name="Sasamoto S."/>
            <person name="Watanabe A."/>
            <person name="Iriguchi M."/>
            <person name="Kawashima K."/>
            <person name="Kimura T."/>
            <person name="Kishida Y."/>
            <person name="Kiyokawa C."/>
            <person name="Kohara M."/>
            <person name="Matsumoto M."/>
            <person name="Matsuno A."/>
            <person name="Nakazaki N."/>
            <person name="Shimpo S."/>
            <person name="Sugimoto M."/>
            <person name="Takeuchi C."/>
            <person name="Yamada M."/>
            <person name="Tabata S."/>
        </authorList>
    </citation>
    <scope>NUCLEOTIDE SEQUENCE [LARGE SCALE GENOMIC DNA]</scope>
    <source>
        <strain>NIES-2133 / IAM M-273 / BP-1</strain>
    </source>
</reference>
<accession>Q8DLW0</accession>
<keyword id="KW-0028">Amino-acid biosynthesis</keyword>
<keyword id="KW-0055">Arginine biosynthesis</keyword>
<keyword id="KW-0963">Cytoplasm</keyword>
<keyword id="KW-0456">Lyase</keyword>
<keyword id="KW-1185">Reference proteome</keyword>
<organism>
    <name type="scientific">Thermosynechococcus vestitus (strain NIES-2133 / IAM M-273 / BP-1)</name>
    <dbReference type="NCBI Taxonomy" id="197221"/>
    <lineage>
        <taxon>Bacteria</taxon>
        <taxon>Bacillati</taxon>
        <taxon>Cyanobacteriota</taxon>
        <taxon>Cyanophyceae</taxon>
        <taxon>Acaryochloridales</taxon>
        <taxon>Thermosynechococcaceae</taxon>
        <taxon>Thermosynechococcus</taxon>
    </lineage>
</organism>
<feature type="chain" id="PRO_0000137837" description="Argininosuccinate lyase">
    <location>
        <begin position="1"/>
        <end position="463"/>
    </location>
</feature>
<evidence type="ECO:0000255" key="1">
    <source>
        <dbReference type="HAMAP-Rule" id="MF_00006"/>
    </source>
</evidence>
<comment type="catalytic activity">
    <reaction evidence="1">
        <text>2-(N(omega)-L-arginino)succinate = fumarate + L-arginine</text>
        <dbReference type="Rhea" id="RHEA:24020"/>
        <dbReference type="ChEBI" id="CHEBI:29806"/>
        <dbReference type="ChEBI" id="CHEBI:32682"/>
        <dbReference type="ChEBI" id="CHEBI:57472"/>
        <dbReference type="EC" id="4.3.2.1"/>
    </reaction>
</comment>
<comment type="pathway">
    <text evidence="1">Amino-acid biosynthesis; L-arginine biosynthesis; L-arginine from L-ornithine and carbamoyl phosphate: step 3/3.</text>
</comment>
<comment type="subcellular location">
    <subcellularLocation>
        <location evidence="1">Cytoplasm</location>
    </subcellularLocation>
</comment>
<comment type="similarity">
    <text evidence="1">Belongs to the lyase 1 family. Argininosuccinate lyase subfamily.</text>
</comment>
<sequence>MSAPPQPWSQRFEQALHPAIARFNASIGFDIRLIEYDLSGSQAHARMLAKTGIISPEEAETLIQGLEQIRQEYRAGQFTPGIEAEDVHFAVERRLTELVGEVGKKLHTARSRNDQVGTDVRLYLRSEIDHILQQLRQWQRTLLDLAQSHVETLIPGYTHLQRAQPLSLAHHLLAYVEMAQRDIERLRQIRERVNISPLGAGALAGTTFPIDRHYTAELLGFREPYRNSLDAVSDRDFVIEFLCAASLIMVHLSRLSEEIILWASEEFAFVQLTDTCATGSSIMPQKKNPDVPELVRGKSGRVFGHLQALLVMMKGLPLAYNKDLQEDKEALFDAVDTVRACLEAMTILMAEGLVFQTQRLAAAVESDFANATDVADYLASKGVPFREAYNLVGQVVKTCVAQQKLLKDLTLEEWQALHPAFGPDIYQRIAPRQVVAARNSYGGTGFDQVRQALAAARDRLNDF</sequence>
<protein>
    <recommendedName>
        <fullName evidence="1">Argininosuccinate lyase</fullName>
        <shortName evidence="1">ASAL</shortName>
        <ecNumber evidence="1">4.3.2.1</ecNumber>
    </recommendedName>
    <alternativeName>
        <fullName evidence="1">Arginosuccinase</fullName>
    </alternativeName>
</protein>
<gene>
    <name evidence="1" type="primary">argH</name>
    <name type="ordered locus">tll0366</name>
</gene>